<gene>
    <name type="primary">TAS2R7</name>
</gene>
<proteinExistence type="inferred from homology"/>
<dbReference type="EMBL" id="AY724873">
    <property type="protein sequence ID" value="AAU21095.1"/>
    <property type="molecule type" value="Genomic_DNA"/>
</dbReference>
<dbReference type="FunCoup" id="Q646C4">
    <property type="interactions" value="228"/>
</dbReference>
<dbReference type="STRING" id="9598.ENSPTRP00000008011"/>
<dbReference type="GlyCosmos" id="Q646C4">
    <property type="glycosylation" value="2 sites, No reported glycans"/>
</dbReference>
<dbReference type="PaxDb" id="9598-ENSPTRP00000008011"/>
<dbReference type="eggNOG" id="ENOG502SKRK">
    <property type="taxonomic scope" value="Eukaryota"/>
</dbReference>
<dbReference type="InParanoid" id="Q646C4"/>
<dbReference type="Proteomes" id="UP000002277">
    <property type="component" value="Unplaced"/>
</dbReference>
<dbReference type="GO" id="GO:0016020">
    <property type="term" value="C:membrane"/>
    <property type="evidence" value="ECO:0000318"/>
    <property type="project" value="GO_Central"/>
</dbReference>
<dbReference type="GO" id="GO:0005886">
    <property type="term" value="C:plasma membrane"/>
    <property type="evidence" value="ECO:0007669"/>
    <property type="project" value="UniProtKB-ARBA"/>
</dbReference>
<dbReference type="GO" id="GO:0033038">
    <property type="term" value="F:bitter taste receptor activity"/>
    <property type="evidence" value="ECO:0000318"/>
    <property type="project" value="GO_Central"/>
</dbReference>
<dbReference type="GO" id="GO:0004930">
    <property type="term" value="F:G protein-coupled receptor activity"/>
    <property type="evidence" value="ECO:0007669"/>
    <property type="project" value="UniProtKB-KW"/>
</dbReference>
<dbReference type="GO" id="GO:0001580">
    <property type="term" value="P:detection of chemical stimulus involved in sensory perception of bitter taste"/>
    <property type="evidence" value="ECO:0000318"/>
    <property type="project" value="GO_Central"/>
</dbReference>
<dbReference type="CDD" id="cd15023">
    <property type="entry name" value="7tm_TAS2R7-like"/>
    <property type="match status" value="1"/>
</dbReference>
<dbReference type="FunFam" id="1.20.1070.10:FF:000042">
    <property type="entry name" value="Taste receptor type 2 member 7"/>
    <property type="match status" value="1"/>
</dbReference>
<dbReference type="Gene3D" id="1.20.1070.10">
    <property type="entry name" value="Rhodopsin 7-helix transmembrane proteins"/>
    <property type="match status" value="1"/>
</dbReference>
<dbReference type="InterPro" id="IPR017452">
    <property type="entry name" value="GPCR_Rhodpsn_7TM"/>
</dbReference>
<dbReference type="InterPro" id="IPR007960">
    <property type="entry name" value="TAS2R"/>
</dbReference>
<dbReference type="PANTHER" id="PTHR11394">
    <property type="entry name" value="TASTE RECEPTOR TYPE 2"/>
    <property type="match status" value="1"/>
</dbReference>
<dbReference type="PANTHER" id="PTHR11394:SF58">
    <property type="entry name" value="TASTE RECEPTOR TYPE 2 MEMBER 7"/>
    <property type="match status" value="1"/>
</dbReference>
<dbReference type="Pfam" id="PF05296">
    <property type="entry name" value="TAS2R"/>
    <property type="match status" value="1"/>
</dbReference>
<dbReference type="SUPFAM" id="SSF81321">
    <property type="entry name" value="Family A G protein-coupled receptor-like"/>
    <property type="match status" value="1"/>
</dbReference>
<dbReference type="PROSITE" id="PS50262">
    <property type="entry name" value="G_PROTEIN_RECEP_F1_2"/>
    <property type="match status" value="1"/>
</dbReference>
<comment type="function">
    <text evidence="1">Gustducin-coupled receptor implicated in the perception of bitter compounds in the oral cavity and the gastrointestinal tract. Signals through PLCB2 and the calcium-regulated cation channel TRPM5 (By similarity).</text>
</comment>
<comment type="subcellular location">
    <subcellularLocation>
        <location>Membrane</location>
        <topology>Multi-pass membrane protein</topology>
    </subcellularLocation>
</comment>
<comment type="miscellaneous">
    <text>Several bitter taste receptors are expressed in a single taste receptor cell.</text>
</comment>
<comment type="similarity">
    <text evidence="3">Belongs to the G-protein coupled receptor T2R family.</text>
</comment>
<evidence type="ECO:0000250" key="1"/>
<evidence type="ECO:0000255" key="2"/>
<evidence type="ECO:0000305" key="3"/>
<keyword id="KW-0297">G-protein coupled receptor</keyword>
<keyword id="KW-0325">Glycoprotein</keyword>
<keyword id="KW-0472">Membrane</keyword>
<keyword id="KW-0675">Receptor</keyword>
<keyword id="KW-1185">Reference proteome</keyword>
<keyword id="KW-0716">Sensory transduction</keyword>
<keyword id="KW-0919">Taste</keyword>
<keyword id="KW-0807">Transducer</keyword>
<keyword id="KW-0812">Transmembrane</keyword>
<keyword id="KW-1133">Transmembrane helix</keyword>
<reference key="1">
    <citation type="journal article" date="2005" name="Mol. Biol. Evol.">
        <title>Evolution of bitter taste receptors in humans and apes.</title>
        <authorList>
            <person name="Fischer A."/>
            <person name="Gilad Y."/>
            <person name="Man O."/>
            <person name="Paeaebo S."/>
        </authorList>
    </citation>
    <scope>NUCLEOTIDE SEQUENCE [GENOMIC DNA]</scope>
</reference>
<protein>
    <recommendedName>
        <fullName>Taste receptor type 2 member 7</fullName>
        <shortName>T2R7</shortName>
    </recommendedName>
</protein>
<accession>Q646C4</accession>
<name>TA2R7_PANTR</name>
<organism>
    <name type="scientific">Pan troglodytes</name>
    <name type="common">Chimpanzee</name>
    <dbReference type="NCBI Taxonomy" id="9598"/>
    <lineage>
        <taxon>Eukaryota</taxon>
        <taxon>Metazoa</taxon>
        <taxon>Chordata</taxon>
        <taxon>Craniata</taxon>
        <taxon>Vertebrata</taxon>
        <taxon>Euteleostomi</taxon>
        <taxon>Mammalia</taxon>
        <taxon>Eutheria</taxon>
        <taxon>Euarchontoglires</taxon>
        <taxon>Primates</taxon>
        <taxon>Haplorrhini</taxon>
        <taxon>Catarrhini</taxon>
        <taxon>Hominidae</taxon>
        <taxon>Pan</taxon>
    </lineage>
</organism>
<sequence length="319" mass="36599">MADKVQTTLLFLAVGEFSVGILGNAFIGLVNCMDWVKKRKIASIDLILTSLAISRICLLCVILLDCFILVLYPDVYATGKEMRIIDFFWTLTNHLSIWFATCLSIYYXFRIANFFHPLFLWMKWRIDRVISWILLGCVVLSVFISLPATENLNADFRFCVKAKRKTNLTWSCRVNKTQHASTKLFLNLATLLPFCVCLMSFFLLILSLRRHIRRMQLSATGCRDPSTEAHVRALKAVISFLLLFIAYYLSFLVATSSYFMPETELAVIFGESIALIYPSSHSFILILGNNKLRHASLKVIWKVMSILKGRKFQQHKQIG</sequence>
<feature type="chain" id="PRO_0000082223" description="Taste receptor type 2 member 7">
    <location>
        <begin position="1"/>
        <end position="319" status="greater than"/>
    </location>
</feature>
<feature type="topological domain" description="Extracellular" evidence="2">
    <location>
        <begin position="1"/>
        <end position="9"/>
    </location>
</feature>
<feature type="transmembrane region" description="Helical; Name=1" evidence="2">
    <location>
        <begin position="10"/>
        <end position="30"/>
    </location>
</feature>
<feature type="topological domain" description="Cytoplasmic" evidence="2">
    <location>
        <begin position="31"/>
        <end position="55"/>
    </location>
</feature>
<feature type="transmembrane region" description="Helical; Name=2" evidence="2">
    <location>
        <begin position="56"/>
        <end position="76"/>
    </location>
</feature>
<feature type="topological domain" description="Extracellular" evidence="2">
    <location>
        <begin position="77"/>
        <end position="94"/>
    </location>
</feature>
<feature type="transmembrane region" description="Helical; Name=3" evidence="2">
    <location>
        <begin position="95"/>
        <end position="115"/>
    </location>
</feature>
<feature type="topological domain" description="Cytoplasmic" evidence="2">
    <location>
        <begin position="116"/>
        <end position="128"/>
    </location>
</feature>
<feature type="transmembrane region" description="Helical; Name=4" evidence="2">
    <location>
        <begin position="129"/>
        <end position="149"/>
    </location>
</feature>
<feature type="topological domain" description="Extracellular" evidence="2">
    <location>
        <begin position="150"/>
        <end position="187"/>
    </location>
</feature>
<feature type="transmembrane region" description="Helical; Name=5" evidence="2">
    <location>
        <begin position="188"/>
        <end position="208"/>
    </location>
</feature>
<feature type="topological domain" description="Cytoplasmic" evidence="2">
    <location>
        <begin position="209"/>
        <end position="235"/>
    </location>
</feature>
<feature type="transmembrane region" description="Helical; Name=6" evidence="2">
    <location>
        <begin position="236"/>
        <end position="256"/>
    </location>
</feature>
<feature type="topological domain" description="Extracellular" evidence="2">
    <location>
        <begin position="257"/>
        <end position="266"/>
    </location>
</feature>
<feature type="transmembrane region" description="Helical; Name=7" evidence="2">
    <location>
        <begin position="267"/>
        <end position="287"/>
    </location>
</feature>
<feature type="topological domain" description="Cytoplasmic" evidence="2">
    <location>
        <begin position="288"/>
        <end position="319"/>
    </location>
</feature>
<feature type="glycosylation site" description="N-linked (GlcNAc...) asparagine" evidence="2">
    <location>
        <position position="167"/>
    </location>
</feature>
<feature type="glycosylation site" description="N-linked (GlcNAc...) asparagine" evidence="2">
    <location>
        <position position="175"/>
    </location>
</feature>
<feature type="non-terminal residue">
    <location>
        <position position="319"/>
    </location>
</feature>